<feature type="signal peptide" evidence="3">
    <location>
        <begin position="1"/>
        <end position="35"/>
    </location>
</feature>
<feature type="chain" id="PRO_0000302850" description="Phosphatidylinositol phosphatase PTPRQ">
    <location>
        <begin position="36"/>
        <end position="2332"/>
    </location>
</feature>
<feature type="topological domain" description="Extracellular" evidence="3">
    <location>
        <begin position="36"/>
        <end position="1947"/>
    </location>
</feature>
<feature type="transmembrane region" description="Helical" evidence="3">
    <location>
        <begin position="1948"/>
        <end position="1968"/>
    </location>
</feature>
<feature type="topological domain" description="Cytoplasmic" evidence="3">
    <location>
        <begin position="1969"/>
        <end position="2332"/>
    </location>
</feature>
<feature type="domain" description="Fibronectin type-III 1" evidence="5">
    <location>
        <begin position="36"/>
        <end position="99"/>
    </location>
</feature>
<feature type="domain" description="Fibronectin type-III 2" evidence="5">
    <location>
        <begin position="100"/>
        <end position="195"/>
    </location>
</feature>
<feature type="domain" description="Fibronectin type-III 3" evidence="5">
    <location>
        <begin position="199"/>
        <end position="294"/>
    </location>
</feature>
<feature type="domain" description="Fibronectin type-III 4" evidence="5">
    <location>
        <begin position="350"/>
        <end position="438"/>
    </location>
</feature>
<feature type="domain" description="Fibronectin type-III 5" evidence="5">
    <location>
        <begin position="441"/>
        <end position="539"/>
    </location>
</feature>
<feature type="domain" description="Fibronectin type-III 6" evidence="5">
    <location>
        <begin position="514"/>
        <end position="606"/>
    </location>
</feature>
<feature type="domain" description="Fibronectin type-III 7" evidence="5">
    <location>
        <begin position="610"/>
        <end position="705"/>
    </location>
</feature>
<feature type="domain" description="Fibronectin type-III 8" evidence="5">
    <location>
        <begin position="710"/>
        <end position="799"/>
    </location>
</feature>
<feature type="domain" description="Fibronectin type-III 9" evidence="5">
    <location>
        <begin position="804"/>
        <end position="894"/>
    </location>
</feature>
<feature type="domain" description="Fibronectin type-III 10" evidence="5">
    <location>
        <begin position="899"/>
        <end position="988"/>
    </location>
</feature>
<feature type="domain" description="Fibronectin type-III 11" evidence="5">
    <location>
        <begin position="993"/>
        <end position="1093"/>
    </location>
</feature>
<feature type="domain" description="Fibronectin type-III 12" evidence="5">
    <location>
        <begin position="1098"/>
        <end position="1190"/>
    </location>
</feature>
<feature type="domain" description="Fibronectin type-III 13" evidence="5">
    <location>
        <begin position="1192"/>
        <end position="1282"/>
    </location>
</feature>
<feature type="domain" description="Fibronectin type-III 14" evidence="5">
    <location>
        <begin position="1287"/>
        <end position="1380"/>
    </location>
</feature>
<feature type="domain" description="Fibronectin type-III 15" evidence="5">
    <location>
        <begin position="1384"/>
        <end position="1470"/>
    </location>
</feature>
<feature type="domain" description="Fibronectin type-III 16" evidence="5">
    <location>
        <begin position="1474"/>
        <end position="1578"/>
    </location>
</feature>
<feature type="domain" description="Fibronectin type-III 17" evidence="5">
    <location>
        <begin position="1583"/>
        <end position="1681"/>
    </location>
</feature>
<feature type="domain" description="Fibronectin type-III 18" evidence="5">
    <location>
        <begin position="1686"/>
        <end position="1787"/>
    </location>
</feature>
<feature type="domain" description="Tyrosine-protein phosphatase" evidence="4">
    <location>
        <begin position="2036"/>
        <end position="2292"/>
    </location>
</feature>
<feature type="active site" description="Phosphocysteine intermediate" evidence="4 6">
    <location>
        <position position="2233"/>
    </location>
</feature>
<feature type="glycosylation site" description="N-linked (GlcNAc...) asparagine" evidence="3">
    <location>
        <position position="94"/>
    </location>
</feature>
<feature type="glycosylation site" description="N-linked (GlcNAc...) asparagine" evidence="3">
    <location>
        <position position="202"/>
    </location>
</feature>
<feature type="glycosylation site" description="N-linked (GlcNAc...) asparagine" evidence="3">
    <location>
        <position position="394"/>
    </location>
</feature>
<feature type="glycosylation site" description="N-linked (GlcNAc...) asparagine" evidence="3">
    <location>
        <position position="944"/>
    </location>
</feature>
<feature type="glycosylation site" description="N-linked (GlcNAc...) asparagine" evidence="3">
    <location>
        <position position="1038"/>
    </location>
</feature>
<feature type="glycosylation site" description="N-linked (GlcNAc...) asparagine" evidence="3">
    <location>
        <position position="1080"/>
    </location>
</feature>
<feature type="glycosylation site" description="N-linked (GlcNAc...) asparagine" evidence="3">
    <location>
        <position position="1101"/>
    </location>
</feature>
<feature type="glycosylation site" description="N-linked (GlcNAc...) asparagine" evidence="3">
    <location>
        <position position="1290"/>
    </location>
</feature>
<feature type="glycosylation site" description="N-linked (GlcNAc...) asparagine" evidence="3">
    <location>
        <position position="1295"/>
    </location>
</feature>
<feature type="glycosylation site" description="N-linked (GlcNAc...) asparagine" evidence="3">
    <location>
        <position position="1844"/>
    </location>
</feature>
<feature type="sequence variant" id="VAR_063526" description="In DFNB84A." evidence="9">
    <original>R</original>
    <variation>G</variation>
    <location>
        <position position="281"/>
    </location>
</feature>
<feature type="sequence variant" id="VAR_069041" description="In dbSNP:rs61729287." evidence="10">
    <original>Q</original>
    <variation>E</variation>
    <location>
        <position position="471"/>
    </location>
</feature>
<feature type="sequence variant" id="VAR_034970" description="In dbSNP:rs12316867.">
    <original>T</original>
    <variation>I</variation>
    <location>
        <position position="1040"/>
    </location>
</feature>
<feature type="sequence variant" id="VAR_034971" description="In dbSNP:rs6539524.">
    <original>F</original>
    <variation>L</variation>
    <location>
        <position position="1098"/>
    </location>
</feature>
<feature type="sequence variant" id="VAR_034972" description="In dbSNP:rs7975340.">
    <original>A</original>
    <variation>P</variation>
    <location>
        <position position="1120"/>
    </location>
</feature>
<feature type="sequence variant" id="VAR_034973" description="In dbSNP:rs17713202.">
    <original>N</original>
    <variation>D</variation>
    <location>
        <position position="1244"/>
    </location>
</feature>
<feature type="sequence variant" id="VAR_034974" description="In dbSNP:rs7963963.">
    <original>I</original>
    <variation>T</variation>
    <location>
        <position position="1734"/>
    </location>
</feature>
<feature type="sequence variant" id="VAR_034975" description="In dbSNP:rs1163042.">
    <original>R</original>
    <variation>K</variation>
    <location>
        <position position="2121"/>
    </location>
</feature>
<feature type="sequence variant" id="VAR_080184" description="In DFNA73; uncertain significance; no effect on PTPRQ expression in patient cells." evidence="12">
    <location>
        <begin position="2327"/>
        <end position="2332"/>
    </location>
</feature>
<feature type="turn" evidence="15">
    <location>
        <begin position="2018"/>
        <end position="2020"/>
    </location>
</feature>
<feature type="helix" evidence="15">
    <location>
        <begin position="2021"/>
        <end position="2042"/>
    </location>
</feature>
<feature type="helix" evidence="15">
    <location>
        <begin position="2053"/>
        <end position="2056"/>
    </location>
</feature>
<feature type="helix" evidence="15">
    <location>
        <begin position="2058"/>
        <end position="2063"/>
    </location>
</feature>
<feature type="turn" evidence="15">
    <location>
        <begin position="2073"/>
        <end position="2075"/>
    </location>
</feature>
<feature type="turn" evidence="15">
    <location>
        <begin position="2086"/>
        <end position="2089"/>
    </location>
</feature>
<feature type="strand" evidence="15">
    <location>
        <begin position="2092"/>
        <end position="2096"/>
    </location>
</feature>
<feature type="strand" evidence="15">
    <location>
        <begin position="2099"/>
        <end position="2101"/>
    </location>
</feature>
<feature type="strand" evidence="15">
    <location>
        <begin position="2105"/>
        <end position="2109"/>
    </location>
</feature>
<feature type="helix" evidence="15">
    <location>
        <begin position="2113"/>
        <end position="2115"/>
    </location>
</feature>
<feature type="helix" evidence="15">
    <location>
        <begin position="2116"/>
        <end position="2126"/>
    </location>
</feature>
<feature type="strand" evidence="15">
    <location>
        <begin position="2130"/>
        <end position="2133"/>
    </location>
</feature>
<feature type="strand" evidence="15">
    <location>
        <begin position="2156"/>
        <end position="2159"/>
    </location>
</feature>
<feature type="strand" evidence="15">
    <location>
        <begin position="2162"/>
        <end position="2171"/>
    </location>
</feature>
<feature type="strand" evidence="15">
    <location>
        <begin position="2173"/>
        <end position="2184"/>
    </location>
</feature>
<feature type="strand" evidence="15">
    <location>
        <begin position="2187"/>
        <end position="2196"/>
    </location>
</feature>
<feature type="strand" evidence="15">
    <location>
        <begin position="2201"/>
        <end position="2204"/>
    </location>
</feature>
<feature type="helix" evidence="15">
    <location>
        <begin position="2209"/>
        <end position="2221"/>
    </location>
</feature>
<feature type="strand" evidence="15">
    <location>
        <begin position="2224"/>
        <end position="2226"/>
    </location>
</feature>
<feature type="strand" evidence="15">
    <location>
        <begin position="2229"/>
        <end position="2238"/>
    </location>
</feature>
<feature type="helix" evidence="15">
    <location>
        <begin position="2239"/>
        <end position="2255"/>
    </location>
</feature>
<feature type="strand" evidence="15">
    <location>
        <begin position="2257"/>
        <end position="2259"/>
    </location>
</feature>
<feature type="helix" evidence="15">
    <location>
        <begin position="2261"/>
        <end position="2271"/>
    </location>
</feature>
<feature type="helix" evidence="15">
    <location>
        <begin position="2279"/>
        <end position="2292"/>
    </location>
</feature>
<dbReference type="EC" id="3.1.3.67" evidence="14"/>
<dbReference type="EC" id="3.1.3.86" evidence="14"/>
<dbReference type="EC" id="3.1.3.95" evidence="14"/>
<dbReference type="EMBL" id="AC083812">
    <property type="status" value="NOT_ANNOTATED_CDS"/>
    <property type="molecule type" value="Genomic_DNA"/>
</dbReference>
<dbReference type="EMBL" id="AC074031">
    <property type="status" value="NOT_ANNOTATED_CDS"/>
    <property type="molecule type" value="Genomic_DNA"/>
</dbReference>
<dbReference type="EMBL" id="AF169351">
    <property type="protein sequence ID" value="AAD50277.1"/>
    <property type="molecule type" value="mRNA"/>
</dbReference>
<dbReference type="PDB" id="4IKC">
    <property type="method" value="X-ray"/>
    <property type="resolution" value="1.56 A"/>
    <property type="chains" value="A=2015-2293"/>
</dbReference>
<dbReference type="PDBsum" id="4IKC"/>
<dbReference type="SMR" id="Q9UMZ3"/>
<dbReference type="FunCoup" id="Q9UMZ3">
    <property type="interactions" value="11"/>
</dbReference>
<dbReference type="STRING" id="9606.ENSP00000495607"/>
<dbReference type="DEPOD" id="PTPRQ"/>
<dbReference type="GlyCosmos" id="Q9UMZ3">
    <property type="glycosylation" value="10 sites, No reported glycans"/>
</dbReference>
<dbReference type="GlyGen" id="Q9UMZ3">
    <property type="glycosylation" value="10 sites"/>
</dbReference>
<dbReference type="iPTMnet" id="Q9UMZ3"/>
<dbReference type="PhosphoSitePlus" id="Q9UMZ3"/>
<dbReference type="BioMuta" id="PTPRQ"/>
<dbReference type="DMDM" id="158563998"/>
<dbReference type="jPOST" id="Q9UMZ3"/>
<dbReference type="MassIVE" id="Q9UMZ3"/>
<dbReference type="PaxDb" id="9606-ENSP00000482885"/>
<dbReference type="ProteomicsDB" id="85237"/>
<dbReference type="AGR" id="HGNC:9679"/>
<dbReference type="GeneCards" id="PTPRQ"/>
<dbReference type="HGNC" id="HGNC:9679">
    <property type="gene designation" value="PTPRQ"/>
</dbReference>
<dbReference type="MalaCards" id="PTPRQ"/>
<dbReference type="MIM" id="603317">
    <property type="type" value="gene"/>
</dbReference>
<dbReference type="MIM" id="613391">
    <property type="type" value="phenotype"/>
</dbReference>
<dbReference type="MIM" id="617663">
    <property type="type" value="phenotype"/>
</dbReference>
<dbReference type="neXtProt" id="NX_Q9UMZ3"/>
<dbReference type="Orphanet" id="90635">
    <property type="disease" value="Rare autosomal dominant non-syndromic sensorineural deafness type DFNA"/>
</dbReference>
<dbReference type="Orphanet" id="90636">
    <property type="disease" value="Rare autosomal recessive non-syndromic sensorineural deafness type DFNB"/>
</dbReference>
<dbReference type="eggNOG" id="KOG0791">
    <property type="taxonomic scope" value="Eukaryota"/>
</dbReference>
<dbReference type="eggNOG" id="KOG3510">
    <property type="taxonomic scope" value="Eukaryota"/>
</dbReference>
<dbReference type="eggNOG" id="KOG4228">
    <property type="taxonomic scope" value="Eukaryota"/>
</dbReference>
<dbReference type="InParanoid" id="Q9UMZ3"/>
<dbReference type="OrthoDB" id="10253954at2759"/>
<dbReference type="PAN-GO" id="Q9UMZ3">
    <property type="GO annotations" value="2 GO annotations based on evolutionary models"/>
</dbReference>
<dbReference type="PhylomeDB" id="Q9UMZ3"/>
<dbReference type="TreeFam" id="TF351926"/>
<dbReference type="BRENDA" id="3.1.3.48">
    <property type="organism ID" value="2681"/>
</dbReference>
<dbReference type="PathwayCommons" id="Q9UMZ3"/>
<dbReference type="SignaLink" id="Q9UMZ3"/>
<dbReference type="ChiTaRS" id="PTPRQ">
    <property type="organism name" value="human"/>
</dbReference>
<dbReference type="EvolutionaryTrace" id="Q9UMZ3"/>
<dbReference type="Pharos" id="Q9UMZ3">
    <property type="development level" value="Tbio"/>
</dbReference>
<dbReference type="PRO" id="PR:Q9UMZ3"/>
<dbReference type="Proteomes" id="UP000005640">
    <property type="component" value="Unplaced"/>
</dbReference>
<dbReference type="RNAct" id="Q9UMZ3">
    <property type="molecule type" value="protein"/>
</dbReference>
<dbReference type="GO" id="GO:0016324">
    <property type="term" value="C:apical plasma membrane"/>
    <property type="evidence" value="ECO:0000250"/>
    <property type="project" value="UniProtKB"/>
</dbReference>
<dbReference type="GO" id="GO:0009925">
    <property type="term" value="C:basal plasma membrane"/>
    <property type="evidence" value="ECO:0007669"/>
    <property type="project" value="UniProtKB-SubCell"/>
</dbReference>
<dbReference type="GO" id="GO:0043235">
    <property type="term" value="C:receptor complex"/>
    <property type="evidence" value="ECO:0000318"/>
    <property type="project" value="GO_Central"/>
</dbReference>
<dbReference type="GO" id="GO:0120044">
    <property type="term" value="C:stereocilium base"/>
    <property type="evidence" value="ECO:0000250"/>
    <property type="project" value="UniProtKB"/>
</dbReference>
<dbReference type="GO" id="GO:0016314">
    <property type="term" value="F:phosphatidylinositol-3,4,5-trisphosphate 3-phosphatase activity"/>
    <property type="evidence" value="ECO:0007669"/>
    <property type="project" value="RHEA"/>
</dbReference>
<dbReference type="GO" id="GO:0034485">
    <property type="term" value="F:phosphatidylinositol-3,4,5-trisphosphate 5-phosphatase activity"/>
    <property type="evidence" value="ECO:0007669"/>
    <property type="project" value="RHEA"/>
</dbReference>
<dbReference type="GO" id="GO:0052629">
    <property type="term" value="F:phosphatidylinositol-3,5-bisphosphate 3-phosphatase activity"/>
    <property type="evidence" value="ECO:0007669"/>
    <property type="project" value="RHEA"/>
</dbReference>
<dbReference type="GO" id="GO:0043813">
    <property type="term" value="F:phosphatidylinositol-3,5-bisphosphate 5-phosphatase activity"/>
    <property type="evidence" value="ECO:0007669"/>
    <property type="project" value="RHEA"/>
</dbReference>
<dbReference type="GO" id="GO:0004725">
    <property type="term" value="F:protein tyrosine phosphatase activity"/>
    <property type="evidence" value="ECO:0007669"/>
    <property type="project" value="UniProtKB-EC"/>
</dbReference>
<dbReference type="GO" id="GO:0050910">
    <property type="term" value="P:detection of mechanical stimulus involved in sensory perception of sound"/>
    <property type="evidence" value="ECO:0000318"/>
    <property type="project" value="GO_Central"/>
</dbReference>
<dbReference type="GO" id="GO:0045598">
    <property type="term" value="P:regulation of fat cell differentiation"/>
    <property type="evidence" value="ECO:0000314"/>
    <property type="project" value="UniProtKB"/>
</dbReference>
<dbReference type="CDD" id="cd00063">
    <property type="entry name" value="FN3"/>
    <property type="match status" value="16"/>
</dbReference>
<dbReference type="CDD" id="cd14616">
    <property type="entry name" value="R-PTPc-Q"/>
    <property type="match status" value="1"/>
</dbReference>
<dbReference type="FunFam" id="2.60.40.10:FF:000937">
    <property type="entry name" value="phosphatidylinositol phosphatase PTPRQ isoform X1"/>
    <property type="match status" value="1"/>
</dbReference>
<dbReference type="FunFam" id="2.60.40.10:FF:001431">
    <property type="entry name" value="phosphatidylinositol phosphatase PTPRQ isoform X1"/>
    <property type="match status" value="1"/>
</dbReference>
<dbReference type="FunFam" id="3.90.190.10:FF:000041">
    <property type="entry name" value="phosphatidylinositol phosphatase PTPRQ isoform X1"/>
    <property type="match status" value="1"/>
</dbReference>
<dbReference type="FunFam" id="2.60.40.10:FF:001217">
    <property type="entry name" value="phosphatidylinositol phosphatase PTPRQ isoform X2"/>
    <property type="match status" value="1"/>
</dbReference>
<dbReference type="FunFam" id="2.60.40.10:FF:001685">
    <property type="entry name" value="phosphatidylinositol phosphatase PTPRQ isoform X2"/>
    <property type="match status" value="1"/>
</dbReference>
<dbReference type="FunFam" id="2.60.40.10:FF:001147">
    <property type="entry name" value="phosphatidylinositol phosphatase PTPRQ isoform X3"/>
    <property type="match status" value="2"/>
</dbReference>
<dbReference type="FunFam" id="2.60.40.10:FF:000478">
    <property type="entry name" value="Protein tyrosine phosphatase, receptor type Q"/>
    <property type="match status" value="2"/>
</dbReference>
<dbReference type="FunFam" id="2.60.40.10:FF:000869">
    <property type="entry name" value="Protein tyrosine phosphatase, receptor type Q"/>
    <property type="match status" value="1"/>
</dbReference>
<dbReference type="FunFam" id="2.60.40.10:FF:001266">
    <property type="entry name" value="Protein tyrosine phosphatase, receptor type Q"/>
    <property type="match status" value="1"/>
</dbReference>
<dbReference type="FunFam" id="2.60.40.10:FF:001474">
    <property type="entry name" value="Protein tyrosine phosphatase, receptor type Q"/>
    <property type="match status" value="1"/>
</dbReference>
<dbReference type="FunFam" id="2.60.40.10:FF:001645">
    <property type="entry name" value="Protein tyrosine phosphatase, receptor type Q"/>
    <property type="match status" value="1"/>
</dbReference>
<dbReference type="FunFam" id="2.60.40.10:FF:001683">
    <property type="entry name" value="Protein tyrosine phosphatase, receptor type Q"/>
    <property type="match status" value="1"/>
</dbReference>
<dbReference type="FunFam" id="2.60.40.10:FF:001879">
    <property type="entry name" value="Protein tyrosine phosphatase, receptor type Q"/>
    <property type="match status" value="1"/>
</dbReference>
<dbReference type="FunFam" id="2.60.40.10:FF:002575">
    <property type="entry name" value="Protein tyrosine phosphatase, receptor type Q"/>
    <property type="match status" value="1"/>
</dbReference>
<dbReference type="Gene3D" id="2.60.40.10">
    <property type="entry name" value="Immunoglobulins"/>
    <property type="match status" value="17"/>
</dbReference>
<dbReference type="Gene3D" id="3.90.190.10">
    <property type="entry name" value="Protein tyrosine phosphatase superfamily"/>
    <property type="match status" value="1"/>
</dbReference>
<dbReference type="InterPro" id="IPR003961">
    <property type="entry name" value="FN3_dom"/>
</dbReference>
<dbReference type="InterPro" id="IPR036116">
    <property type="entry name" value="FN3_sf"/>
</dbReference>
<dbReference type="InterPro" id="IPR013783">
    <property type="entry name" value="Ig-like_fold"/>
</dbReference>
<dbReference type="InterPro" id="IPR029021">
    <property type="entry name" value="Prot-tyrosine_phosphatase-like"/>
</dbReference>
<dbReference type="InterPro" id="IPR000242">
    <property type="entry name" value="PTP_cat"/>
</dbReference>
<dbReference type="InterPro" id="IPR050713">
    <property type="entry name" value="RTP_Phos/Ushers"/>
</dbReference>
<dbReference type="InterPro" id="IPR016130">
    <property type="entry name" value="Tyr_Pase_AS"/>
</dbReference>
<dbReference type="InterPro" id="IPR003595">
    <property type="entry name" value="Tyr_Pase_cat"/>
</dbReference>
<dbReference type="InterPro" id="IPR000387">
    <property type="entry name" value="Tyr_Pase_dom"/>
</dbReference>
<dbReference type="PANTHER" id="PTHR46957">
    <property type="entry name" value="CYTOKINE RECEPTOR"/>
    <property type="match status" value="1"/>
</dbReference>
<dbReference type="PANTHER" id="PTHR46957:SF1">
    <property type="entry name" value="PHOSPHATIDYLINOSITOL PHOSPHATASE PTPRQ"/>
    <property type="match status" value="1"/>
</dbReference>
<dbReference type="Pfam" id="PF00041">
    <property type="entry name" value="fn3"/>
    <property type="match status" value="14"/>
</dbReference>
<dbReference type="Pfam" id="PF00102">
    <property type="entry name" value="Y_phosphatase"/>
    <property type="match status" value="1"/>
</dbReference>
<dbReference type="PRINTS" id="PR00700">
    <property type="entry name" value="PRTYPHPHTASE"/>
</dbReference>
<dbReference type="SMART" id="SM00060">
    <property type="entry name" value="FN3"/>
    <property type="match status" value="17"/>
</dbReference>
<dbReference type="SMART" id="SM00194">
    <property type="entry name" value="PTPc"/>
    <property type="match status" value="1"/>
</dbReference>
<dbReference type="SMART" id="SM00404">
    <property type="entry name" value="PTPc_motif"/>
    <property type="match status" value="1"/>
</dbReference>
<dbReference type="SUPFAM" id="SSF52799">
    <property type="entry name" value="(Phosphotyrosine protein) phosphatases II"/>
    <property type="match status" value="1"/>
</dbReference>
<dbReference type="SUPFAM" id="SSF49265">
    <property type="entry name" value="Fibronectin type III"/>
    <property type="match status" value="9"/>
</dbReference>
<dbReference type="PROSITE" id="PS50853">
    <property type="entry name" value="FN3"/>
    <property type="match status" value="17"/>
</dbReference>
<dbReference type="PROSITE" id="PS00383">
    <property type="entry name" value="TYR_PHOSPHATASE_1"/>
    <property type="match status" value="1"/>
</dbReference>
<dbReference type="PROSITE" id="PS50056">
    <property type="entry name" value="TYR_PHOSPHATASE_2"/>
    <property type="match status" value="1"/>
</dbReference>
<dbReference type="PROSITE" id="PS50055">
    <property type="entry name" value="TYR_PHOSPHATASE_PTP"/>
    <property type="match status" value="1"/>
</dbReference>
<reference key="1">
    <citation type="journal article" date="2006" name="Nature">
        <title>The finished DNA sequence of human chromosome 12.</title>
        <authorList>
            <person name="Scherer S.E."/>
            <person name="Muzny D.M."/>
            <person name="Buhay C.J."/>
            <person name="Chen R."/>
            <person name="Cree A."/>
            <person name="Ding Y."/>
            <person name="Dugan-Rocha S."/>
            <person name="Gill R."/>
            <person name="Gunaratne P."/>
            <person name="Harris R.A."/>
            <person name="Hawes A.C."/>
            <person name="Hernandez J."/>
            <person name="Hodgson A.V."/>
            <person name="Hume J."/>
            <person name="Jackson A."/>
            <person name="Khan Z.M."/>
            <person name="Kovar-Smith C."/>
            <person name="Lewis L.R."/>
            <person name="Lozado R.J."/>
            <person name="Metzker M.L."/>
            <person name="Milosavljevic A."/>
            <person name="Miner G.R."/>
            <person name="Montgomery K.T."/>
            <person name="Morgan M.B."/>
            <person name="Nazareth L.V."/>
            <person name="Scott G."/>
            <person name="Sodergren E."/>
            <person name="Song X.-Z."/>
            <person name="Steffen D."/>
            <person name="Lovering R.C."/>
            <person name="Wheeler D.A."/>
            <person name="Worley K.C."/>
            <person name="Yuan Y."/>
            <person name="Zhang Z."/>
            <person name="Adams C.Q."/>
            <person name="Ansari-Lari M.A."/>
            <person name="Ayele M."/>
            <person name="Brown M.J."/>
            <person name="Chen G."/>
            <person name="Chen Z."/>
            <person name="Clerc-Blankenburg K.P."/>
            <person name="Davis C."/>
            <person name="Delgado O."/>
            <person name="Dinh H.H."/>
            <person name="Draper H."/>
            <person name="Gonzalez-Garay M.L."/>
            <person name="Havlak P."/>
            <person name="Jackson L.R."/>
            <person name="Jacob L.S."/>
            <person name="Kelly S.H."/>
            <person name="Li L."/>
            <person name="Li Z."/>
            <person name="Liu J."/>
            <person name="Liu W."/>
            <person name="Lu J."/>
            <person name="Maheshwari M."/>
            <person name="Nguyen B.-V."/>
            <person name="Okwuonu G.O."/>
            <person name="Pasternak S."/>
            <person name="Perez L.M."/>
            <person name="Plopper F.J.H."/>
            <person name="Santibanez J."/>
            <person name="Shen H."/>
            <person name="Tabor P.E."/>
            <person name="Verduzco D."/>
            <person name="Waldron L."/>
            <person name="Wang Q."/>
            <person name="Williams G.A."/>
            <person name="Zhang J."/>
            <person name="Zhou J."/>
            <person name="Allen C.C."/>
            <person name="Amin A.G."/>
            <person name="Anyalebechi V."/>
            <person name="Bailey M."/>
            <person name="Barbaria J.A."/>
            <person name="Bimage K.E."/>
            <person name="Bryant N.P."/>
            <person name="Burch P.E."/>
            <person name="Burkett C.E."/>
            <person name="Burrell K.L."/>
            <person name="Calderon E."/>
            <person name="Cardenas V."/>
            <person name="Carter K."/>
            <person name="Casias K."/>
            <person name="Cavazos I."/>
            <person name="Cavazos S.R."/>
            <person name="Ceasar H."/>
            <person name="Chacko J."/>
            <person name="Chan S.N."/>
            <person name="Chavez D."/>
            <person name="Christopoulos C."/>
            <person name="Chu J."/>
            <person name="Cockrell R."/>
            <person name="Cox C.D."/>
            <person name="Dang M."/>
            <person name="Dathorne S.R."/>
            <person name="David R."/>
            <person name="Davis C.M."/>
            <person name="Davy-Carroll L."/>
            <person name="Deshazo D.R."/>
            <person name="Donlin J.E."/>
            <person name="D'Souza L."/>
            <person name="Eaves K.A."/>
            <person name="Egan A."/>
            <person name="Emery-Cohen A.J."/>
            <person name="Escotto M."/>
            <person name="Flagg N."/>
            <person name="Forbes L.D."/>
            <person name="Gabisi A.M."/>
            <person name="Garza M."/>
            <person name="Hamilton C."/>
            <person name="Henderson N."/>
            <person name="Hernandez O."/>
            <person name="Hines S."/>
            <person name="Hogues M.E."/>
            <person name="Huang M."/>
            <person name="Idlebird D.G."/>
            <person name="Johnson R."/>
            <person name="Jolivet A."/>
            <person name="Jones S."/>
            <person name="Kagan R."/>
            <person name="King L.M."/>
            <person name="Leal B."/>
            <person name="Lebow H."/>
            <person name="Lee S."/>
            <person name="LeVan J.M."/>
            <person name="Lewis L.C."/>
            <person name="London P."/>
            <person name="Lorensuhewa L.M."/>
            <person name="Loulseged H."/>
            <person name="Lovett D.A."/>
            <person name="Lucier A."/>
            <person name="Lucier R.L."/>
            <person name="Ma J."/>
            <person name="Madu R.C."/>
            <person name="Mapua P."/>
            <person name="Martindale A.D."/>
            <person name="Martinez E."/>
            <person name="Massey E."/>
            <person name="Mawhiney S."/>
            <person name="Meador M.G."/>
            <person name="Mendez S."/>
            <person name="Mercado C."/>
            <person name="Mercado I.C."/>
            <person name="Merritt C.E."/>
            <person name="Miner Z.L."/>
            <person name="Minja E."/>
            <person name="Mitchell T."/>
            <person name="Mohabbat F."/>
            <person name="Mohabbat K."/>
            <person name="Montgomery B."/>
            <person name="Moore N."/>
            <person name="Morris S."/>
            <person name="Munidasa M."/>
            <person name="Ngo R.N."/>
            <person name="Nguyen N.B."/>
            <person name="Nickerson E."/>
            <person name="Nwaokelemeh O.O."/>
            <person name="Nwokenkwo S."/>
            <person name="Obregon M."/>
            <person name="Oguh M."/>
            <person name="Oragunye N."/>
            <person name="Oviedo R.J."/>
            <person name="Parish B.J."/>
            <person name="Parker D.N."/>
            <person name="Parrish J."/>
            <person name="Parks K.L."/>
            <person name="Paul H.A."/>
            <person name="Payton B.A."/>
            <person name="Perez A."/>
            <person name="Perrin W."/>
            <person name="Pickens A."/>
            <person name="Primus E.L."/>
            <person name="Pu L.-L."/>
            <person name="Puazo M."/>
            <person name="Quiles M.M."/>
            <person name="Quiroz J.B."/>
            <person name="Rabata D."/>
            <person name="Reeves K."/>
            <person name="Ruiz S.J."/>
            <person name="Shao H."/>
            <person name="Sisson I."/>
            <person name="Sonaike T."/>
            <person name="Sorelle R.P."/>
            <person name="Sutton A.E."/>
            <person name="Svatek A.F."/>
            <person name="Svetz L.A."/>
            <person name="Tamerisa K.S."/>
            <person name="Taylor T.R."/>
            <person name="Teague B."/>
            <person name="Thomas N."/>
            <person name="Thorn R.D."/>
            <person name="Trejos Z.Y."/>
            <person name="Trevino B.K."/>
            <person name="Ukegbu O.N."/>
            <person name="Urban J.B."/>
            <person name="Vasquez L.I."/>
            <person name="Vera V.A."/>
            <person name="Villasana D.M."/>
            <person name="Wang L."/>
            <person name="Ward-Moore S."/>
            <person name="Warren J.T."/>
            <person name="Wei X."/>
            <person name="White F."/>
            <person name="Williamson A.L."/>
            <person name="Wleczyk R."/>
            <person name="Wooden H.S."/>
            <person name="Wooden S.H."/>
            <person name="Yen J."/>
            <person name="Yoon L."/>
            <person name="Yoon V."/>
            <person name="Zorrilla S.E."/>
            <person name="Nelson D."/>
            <person name="Kucherlapati R."/>
            <person name="Weinstock G."/>
            <person name="Gibbs R.A."/>
        </authorList>
    </citation>
    <scope>NUCLEOTIDE SEQUENCE [LARGE SCALE GENOMIC DNA]</scope>
</reference>
<reference key="2">
    <citation type="submission" date="1999-07" db="EMBL/GenBank/DDBJ databases">
        <title>Differential expression of PTPase RNAs resulting from K562 differentiation induced by PMA.</title>
        <authorList>
            <person name="Dayton M.A."/>
            <person name="Blanchard K.L."/>
        </authorList>
    </citation>
    <scope>NUCLEOTIDE SEQUENCE [MRNA] OF 2133-2266</scope>
</reference>
<reference key="3">
    <citation type="journal article" date="2003" name="Exp. Cell Res.">
        <title>PTPRQ is a novel phosphatidylinositol phosphatase that can be expressed as a cytoplasmic protein or as a subcellularly localized receptor-like protein.</title>
        <authorList>
            <person name="Seifert R.A."/>
            <person name="Coats S.A."/>
            <person name="Oganesian A."/>
            <person name="Wright M.B."/>
            <person name="Dishmon M."/>
            <person name="Booth C.J."/>
            <person name="Johnson R.J."/>
            <person name="Alpers C.E."/>
            <person name="Bowen-Pope D.F."/>
        </authorList>
    </citation>
    <scope>SUBCELLULAR LOCATION</scope>
    <scope>TISSUE SPECIFICITY</scope>
</reference>
<reference key="4">
    <citation type="journal article" date="2009" name="Biochem. Biophys. Res. Commun.">
        <title>Involvement of PTP-RQ in differentiation during adipogenesis of human mesenchymal stem cells.</title>
        <authorList>
            <person name="Jung H."/>
            <person name="Kim W.K."/>
            <person name="Kim do H."/>
            <person name="Cho Y.S."/>
            <person name="Kim S.J."/>
            <person name="Park S.G."/>
            <person name="Park B.C."/>
            <person name="Lim H.M."/>
            <person name="Bae K.H."/>
            <person name="Lee S.C."/>
        </authorList>
    </citation>
    <scope>FUNCTION</scope>
    <scope>INDUCTION</scope>
</reference>
<reference key="5">
    <citation type="journal article" date="2013" name="Acta Crystallogr. D">
        <title>Structural basis for the dephosphorylating activity of PTPRQ towards phosphatidylinositide substrates.</title>
        <authorList>
            <person name="Yu K.R."/>
            <person name="Kim Y.J."/>
            <person name="Jung S.K."/>
            <person name="Ku B."/>
            <person name="Park H."/>
            <person name="Cho S.Y."/>
            <person name="Jung H."/>
            <person name="Chung S.J."/>
            <person name="Bae K.H."/>
            <person name="Lee S.C."/>
            <person name="Kim B.Y."/>
            <person name="Erikson R.L."/>
            <person name="Ryu S.E."/>
            <person name="Kim S.J."/>
        </authorList>
    </citation>
    <scope>FUNCTION</scope>
    <scope>CATALYTIC ACTIVITY</scope>
</reference>
<reference key="6">
    <citation type="journal article" date="2010" name="Am. J. Hum. Genet.">
        <title>Mutations in PTPRQ are a cause of autosomal-recessive nonsyndromic hearing impairment DFNB84 and associated with vestibular dysfunction.</title>
        <authorList>
            <person name="Schraders M."/>
            <person name="Oostrik J."/>
            <person name="Huygen P.L."/>
            <person name="Strom T.M."/>
            <person name="van Wijk E."/>
            <person name="Kunst H.P."/>
            <person name="Hoefsloot L.H."/>
            <person name="Cremers C.W."/>
            <person name="Admiraal R.J."/>
            <person name="Kremer H."/>
        </authorList>
    </citation>
    <scope>TISSUE SPECIFICITY</scope>
    <scope>DEVELOPMENTAL STAGE</scope>
    <scope>VARIANT DFNB84A GLY-281</scope>
</reference>
<reference key="7">
    <citation type="journal article" date="2010" name="J. Med. Genet.">
        <title>Nonsense mutation of the stereociliar membrane protein gene PTPRQ in human hearing loss DFNB84.</title>
        <authorList>
            <person name="Shahin H."/>
            <person name="Rahil M."/>
            <person name="Abu Rayan A."/>
            <person name="Avraham K.B."/>
            <person name="King M.C."/>
            <person name="Kanaan M."/>
            <person name="Walsh T."/>
        </authorList>
    </citation>
    <scope>INVOLVEMENT IN DFNB84A</scope>
    <scope>VARIANT GLU-471</scope>
</reference>
<reference key="8">
    <citation type="journal article" date="2018" name="Genet. Med.">
        <title>A C-terminal nonsense mutation links PTPRQ with autosomal-dominant hearing loss, DFNA73.</title>
        <authorList>
            <person name="Eisenberger T."/>
            <person name="Di Donato N."/>
            <person name="Decker C."/>
            <person name="Delle Vedove A."/>
            <person name="Neuhaus C."/>
            <person name="Nuernberg G."/>
            <person name="Toliat M."/>
            <person name="Nuernberg P."/>
            <person name="Muerbe D."/>
            <person name="Bolz H.J."/>
        </authorList>
    </citation>
    <scope>INVOLVEMENT IN DFNA73</scope>
    <scope>VARIANT DFNA73 2327-TRP--MET-2332 DEL</scope>
    <scope>CHARACTERIZATION OF VARIANT DFNA73 2327-TRP--MET-2332 DEL</scope>
</reference>
<name>PTPRQ_HUMAN</name>
<organism>
    <name type="scientific">Homo sapiens</name>
    <name type="common">Human</name>
    <dbReference type="NCBI Taxonomy" id="9606"/>
    <lineage>
        <taxon>Eukaryota</taxon>
        <taxon>Metazoa</taxon>
        <taxon>Chordata</taxon>
        <taxon>Craniata</taxon>
        <taxon>Vertebrata</taxon>
        <taxon>Euteleostomi</taxon>
        <taxon>Mammalia</taxon>
        <taxon>Eutheria</taxon>
        <taxon>Euarchontoglires</taxon>
        <taxon>Primates</taxon>
        <taxon>Haplorrhini</taxon>
        <taxon>Catarrhini</taxon>
        <taxon>Hominidae</taxon>
        <taxon>Homo</taxon>
    </lineage>
</organism>
<sequence>MKKVPIKPEQPEKLRAFNISTHSFSLHWSLPSGHVERYQVDLVPDSGFVTIRDLGGGEYQVDVSNVVPGTRYDITISSISTTYTSPVTRIVTTNVTKPGPPVFLAGERVGSAGILLSWNTPPNPNGRIISYIVKYKEVCPWMQTVYTQVRSKPDSLEVLLTNLNPGTTYEIKVAAENSAGIGVFSDPFLFQTAESAPGKVVNLTVEAYNASAVKLIWYLPRQPNGKITSFKISVKHARSGIVVKDVSIRVEDILTGKLPECNENSESFLWSTASPSPTLGRVTPPSRTTHSSSTLTQNEISSVWKEPISFVVTHLRPYTTYLFEVSAVTTEAGYIDSTIVRTPESVPEGPPQNCVTGNITGKSFSILWDPPTIVTGKFSYRVELYGPSGRILDNSTKDLKFAFTNLTPFTMYDVYIAAETSAGTGPKSNISVFTPPDVPGAVFDLQLAEVESTQVRITWKKPRQPNGIINQYRVKVLVPETGIILENTLLTGNNEYINDPMAPEIVNIVEPMVGLYEGSAEMSSDLHSLATFIYNSHPDKNFPARNRAEDQTSPVVTTRNQYITDIAAEQLSYVIRRLVPFTEHMISVSAFTIMGEGPPTVLSVRTRQQVPSSIKIINYKNISSSSILLYWDPPEYPNGKITHYTIYAMELDTNRAFQITTIDNSFLITGLKKYTKYKMRVAASTHVGESSLSEENDIFVRTSEDEPESSPQDVEVIDVTADEIRLKWSPPEKPNGIIIAYEVLYKNIDTLYMKNTSTTDIILRNLRPHTLYNISVRSYTRFGHGNQVSSLLSVRTSETVPDSAPENITYKNISSGEIELSFLPPSSPNGIIKKYTIYLKRSNGNEERTINTTSLTQNIKVLKKYTQYIIEVSASTLKGEGVRSAPISILTEEDAPDSPPQDFSVKQLSGVTVKLSWQPPLEPNGIILYYTVYVWNRSSLKTINVTETSLELSDLDYNVEYSAYVTASTRFGDGKTRSNIISFQTPEGAPSDPPKDVYYANLSSSSIILFWTPPSKPNGIIQYYSVYYRNTSGTFMQNFTLHEVTNDFDNMTVSTIIDKLTIFSYYTFWLTASTSVGNGNKSSDIIEVYTDQDIPEGFVGNLTYESISSTAINVSWVPPAQPNGLVFYYVSLILQQTPRHVRPPLVTYERSIYFDNLEKYTDYILKITPSTEKGFSDTYTAQLYIKTEEDVPETSPIINTFKNLSSTSVLLSWDPPVKPNGAIISYDLTLQGPNENYSFITSDNYIILEELSPFTLYSFFAAARTRKGLGPSSILFFYTDESVPLAPPQNLTLINCTSDFVWLKWSPSPLPGGIVKVYSFKIHEHETDTIYYKNISGFKTEAKLVGLEPVSTYSIRVSAFTKVGNGNQFSNVVKFTTQESVPDVVQNMQCMATSWQSVLVKWDPPKKANGIITQYMVTVERNSTKVSPQDHMYTFIKLLANTSYVFKVRASTSAGEGDESTCHVSTLPETVPSVPTNIAFSDVQSTSATLTWIRPDTILGYFQNYKITTQLRAQKCKEWESEECVEYQKIQYLYEAHLTEETVYGLKKFRWYRFQVAASTNAGYGNASNWISTKTLPGPPDGPPENVHVVATSPFSISISWSEPAVITGPTCYLIDVKSVDNDEFNISFIKSNEENKTIEIKDLEIFTRYSVVITAFTGNISAAYVEGKSSAEMIVTTLESAPKDPPNNMTFQKIPDEVTKFQLTFLPPSQPNGNIQVYQALVYREDDPTAVQIHNLSIIQKTNTFVIAMLEGLKGGHTYNISVYAVNSAGAGPKVPMRITMDIKAPARPKTKPTPIYDATGKLLVTSTTITIRMPICYYSDDHGPIKNVQVLVTETGAQHDGNVTKWYDAYFNKARPYFTNEGFPNPPCTEGKTKFSGNEEIYIIGADNACMIPGNEDKICNGPLKPKKQYLFKFRATNIMGQFTDSDYSDPVKTLGEGLSERTVEIILSVTLCILSIILLGTAIFAFARIRQKQKEGGTYSPQDAEIIDTKLKLDQLITVADLELKDERLTRPISKKSFLQHVEELCTNNNLKFQEEFSELPKFLQDLSSTDADLPWNRAKNRFPNIKPYNNNRVKLIADASVPGSDYINASYISGYLCPNEFIATQGPLPGTVGDFWRMVWETRAKTLVMLTQCFEKGRIRCHQYWPEDNKPVTVFGDIVITKLMEDVQIDWTIRDLKIERHGDCMTVRQCNFTAWPEHGVPENSAPLIHFVKLVRASRAHDTTPMIVHCSAGVGRTGVFIALDHLTQHINDHDFVDIYGLVAELRSERMCMVQNLAQYIFLHQCILDLLSNKGSNQPICFVNYSALQKMDSLDAMEGDVELEWEETTM</sequence>
<proteinExistence type="evidence at protein level"/>
<protein>
    <recommendedName>
        <fullName>Phosphatidylinositol phosphatase PTPRQ</fullName>
        <ecNumber evidence="14">3.1.3.67</ecNumber>
        <ecNumber evidence="14">3.1.3.86</ecNumber>
        <ecNumber evidence="14">3.1.3.95</ecNumber>
    </recommendedName>
    <alternativeName>
        <fullName>Receptor-type tyrosine-protein phosphatase Q</fullName>
        <shortName>PTP-RQ</shortName>
        <shortName>R-PTP-Q</shortName>
    </alternativeName>
</protein>
<accession>Q9UMZ3</accession>
<keyword id="KW-0002">3D-structure</keyword>
<keyword id="KW-1003">Cell membrane</keyword>
<keyword id="KW-0966">Cell projection</keyword>
<keyword id="KW-0209">Deafness</keyword>
<keyword id="KW-0225">Disease variant</keyword>
<keyword id="KW-0325">Glycoprotein</keyword>
<keyword id="KW-0378">Hydrolase</keyword>
<keyword id="KW-0443">Lipid metabolism</keyword>
<keyword id="KW-0472">Membrane</keyword>
<keyword id="KW-1010">Non-syndromic deafness</keyword>
<keyword id="KW-1208">Phospholipid metabolism</keyword>
<keyword id="KW-0904">Protein phosphatase</keyword>
<keyword id="KW-1267">Proteomics identification</keyword>
<keyword id="KW-0675">Receptor</keyword>
<keyword id="KW-1185">Reference proteome</keyword>
<keyword id="KW-0677">Repeat</keyword>
<keyword id="KW-0732">Signal</keyword>
<keyword id="KW-0812">Transmembrane</keyword>
<keyword id="KW-1133">Transmembrane helix</keyword>
<comment type="function">
    <text evidence="1 2 8 10 11 12">Dephosphorylates phosphatidylinositol phosphates, such as phosphatidylinositol 3,4,5-trisphosphate (PIP3) and phosphatidylinositol 3,5-diphosphates, with preference for PIP3 (PubMed:23897475). Phosphate can be hydrolyzed from the D3 and D5 positions in the inositol ring (PubMed:23897475). Has low tyrosine-protein phosphatase activity in vitro; however, the relevance of such activity in vivo is unclear (By similarity). Plays an important role in adipogenesis of mesenchymal stem cells (MSCs). Regulates the phosphorylation state of AKT1 by regulating the levels of PIP3 in MSCs and preadipocyte cells (PubMed:19351528). Required for hair bundle maturation, a process that enables hair cells to detect and transmit sound and balance signals effectively, therefore affecting auditory function (PubMed:20472657, PubMed:29309402). May act by regulating the level of phosphatidylinositol 4,5-bisphosphate (PIP2) level in the basal region of hair bundles (By similarity).</text>
</comment>
<comment type="catalytic activity">
    <reaction evidence="14">
        <text>a 1,2-diacyl-sn-glycero-3-phospho-(1D-myo-inositol-3,4,5-trisphosphate) + H2O = a 1,2-diacyl-sn-glycero-3-phospho-(1D-myo-inositol-4,5-bisphosphate) + phosphate</text>
        <dbReference type="Rhea" id="RHEA:25017"/>
        <dbReference type="ChEBI" id="CHEBI:15377"/>
        <dbReference type="ChEBI" id="CHEBI:43474"/>
        <dbReference type="ChEBI" id="CHEBI:57836"/>
        <dbReference type="ChEBI" id="CHEBI:58456"/>
        <dbReference type="EC" id="3.1.3.67"/>
    </reaction>
    <physiologicalReaction direction="left-to-right" evidence="14">
        <dbReference type="Rhea" id="RHEA:25018"/>
    </physiologicalReaction>
</comment>
<comment type="catalytic activity">
    <reaction evidence="14">
        <text>a 1,2-diacyl-sn-glycero-3-phospho-(1D-myo-inositol-3,4,5-trisphosphate) + H2O = a 1,2-diacyl-sn-glycero-3-phospho-(1D-myo-inositol-3,4-bisphosphate) + phosphate</text>
        <dbReference type="Rhea" id="RHEA:25528"/>
        <dbReference type="ChEBI" id="CHEBI:15377"/>
        <dbReference type="ChEBI" id="CHEBI:43474"/>
        <dbReference type="ChEBI" id="CHEBI:57658"/>
        <dbReference type="ChEBI" id="CHEBI:57836"/>
        <dbReference type="EC" id="3.1.3.86"/>
    </reaction>
    <physiologicalReaction direction="left-to-right" evidence="14">
        <dbReference type="Rhea" id="RHEA:25529"/>
    </physiologicalReaction>
</comment>
<comment type="catalytic activity">
    <reaction evidence="14">
        <text>a 1,2-diacyl-sn-glycero-3-phospho-(1D-myo-inositol-3,5-bisphosphate) + H2O = a 1,2-diacyl-sn-glycero-3-phospho-(1D-myo-inositol-5-phosphate) + phosphate</text>
        <dbReference type="Rhea" id="RHEA:39019"/>
        <dbReference type="ChEBI" id="CHEBI:15377"/>
        <dbReference type="ChEBI" id="CHEBI:43474"/>
        <dbReference type="ChEBI" id="CHEBI:57795"/>
        <dbReference type="ChEBI" id="CHEBI:57923"/>
        <dbReference type="EC" id="3.1.3.95"/>
    </reaction>
    <physiologicalReaction direction="left-to-right" evidence="14">
        <dbReference type="Rhea" id="RHEA:39020"/>
    </physiologicalReaction>
</comment>
<comment type="catalytic activity">
    <reaction evidence="14">
        <text>a 1,2-diacyl-sn-glycero-3-phospho-(1D-myo-inositol-3,5-bisphosphate) + H2O = a 1,2-diacyl-sn-glycero-3-phospho-(1D-myo-inositol-3-phosphate) + phosphate</text>
        <dbReference type="Rhea" id="RHEA:32955"/>
        <dbReference type="ChEBI" id="CHEBI:15377"/>
        <dbReference type="ChEBI" id="CHEBI:43474"/>
        <dbReference type="ChEBI" id="CHEBI:57923"/>
        <dbReference type="ChEBI" id="CHEBI:58088"/>
    </reaction>
    <physiologicalReaction direction="left-to-right" evidence="14">
        <dbReference type="Rhea" id="RHEA:32956"/>
    </physiologicalReaction>
</comment>
<comment type="subunit">
    <text evidence="2">Interacts with TPRN. TPRN, CLIC5 and PTPQR form concentric rings at the base of stereocilia and may form a complex.</text>
</comment>
<comment type="subcellular location">
    <subcellularLocation>
        <location evidence="2">Cell projection</location>
        <location evidence="2">Stereocilium</location>
    </subcellularLocation>
    <subcellularLocation>
        <location>Apical cell membrane</location>
        <topology evidence="3">Single-pass type I membrane protein</topology>
    </subcellularLocation>
    <subcellularLocation>
        <location evidence="7">Basal cell membrane</location>
        <topology evidence="3">Single-pass type I membrane protein</topology>
    </subcellularLocation>
    <text evidence="2 7">Detected at the stereocilium base and at the apical cell membrane in mature hair cells (By similarity). Forms ring-like structures in the stereocilium taper region (By similarity). Detected at the basal cell membrane in fetal kidney podocytes (PubMed:12837292).</text>
</comment>
<comment type="tissue specificity">
    <text evidence="7 9">In developing kidney, it localizes to the basal membrane of podocytes, beginning when podocyte progenitors can first be identified in the embryonic kidney (at protein level). Expressed in lung and kidney.</text>
</comment>
<comment type="developmental stage">
    <text evidence="9">Expressed at highest levels in fetal kidney, followed by fetal lung and fetal cochlea.</text>
</comment>
<comment type="induction">
    <text evidence="8">Down-regulated during adipogenesis of mesenchymal stem cells.</text>
</comment>
<comment type="disease" evidence="9 10">
    <disease id="DI-02691">
        <name>Deafness, autosomal recessive, 84A</name>
        <acronym>DFNB84A</acronym>
        <description>A form of non-syndromic deafness characterized by progressive, sensorineural hearing loss and vestibular dysfunction.</description>
        <dbReference type="MIM" id="613391"/>
    </disease>
    <text>The disease is caused by variants affecting the gene represented in this entry.</text>
</comment>
<comment type="disease" evidence="12">
    <disease id="DI-05089">
        <name>Deafness, autosomal dominant, 73</name>
        <acronym>DFNA73</acronym>
        <description>A form of non-syndromic hearing loss characterized by mild to severe bilateral symptoms with variable age of onset from early childhood to the third decade.</description>
        <dbReference type="MIM" id="617663"/>
    </disease>
    <text>The disease may be caused by variants affecting the gene represented in this entry.</text>
</comment>
<comment type="similarity">
    <text evidence="13">Belongs to the protein-tyrosine phosphatase family. Receptor class 2A subfamily.</text>
</comment>
<gene>
    <name type="primary">PTPRQ</name>
</gene>
<evidence type="ECO:0000250" key="1">
    <source>
        <dbReference type="UniProtKB" id="O88488"/>
    </source>
</evidence>
<evidence type="ECO:0000250" key="2">
    <source>
        <dbReference type="UniProtKB" id="P0C5E4"/>
    </source>
</evidence>
<evidence type="ECO:0000255" key="3"/>
<evidence type="ECO:0000255" key="4">
    <source>
        <dbReference type="PROSITE-ProRule" id="PRU00160"/>
    </source>
</evidence>
<evidence type="ECO:0000255" key="5">
    <source>
        <dbReference type="PROSITE-ProRule" id="PRU00316"/>
    </source>
</evidence>
<evidence type="ECO:0000255" key="6">
    <source>
        <dbReference type="PROSITE-ProRule" id="PRU10044"/>
    </source>
</evidence>
<evidence type="ECO:0000269" key="7">
    <source>
    </source>
</evidence>
<evidence type="ECO:0000269" key="8">
    <source>
    </source>
</evidence>
<evidence type="ECO:0000269" key="9">
    <source>
    </source>
</evidence>
<evidence type="ECO:0000269" key="10">
    <source>
    </source>
</evidence>
<evidence type="ECO:0000269" key="11">
    <source>
    </source>
</evidence>
<evidence type="ECO:0000269" key="12">
    <source>
    </source>
</evidence>
<evidence type="ECO:0000305" key="13"/>
<evidence type="ECO:0000305" key="14">
    <source>
    </source>
</evidence>
<evidence type="ECO:0007829" key="15">
    <source>
        <dbReference type="PDB" id="4IKC"/>
    </source>
</evidence>